<protein>
    <recommendedName>
        <fullName evidence="1">tRNA modification GTPase MnmE</fullName>
        <ecNumber evidence="1">3.6.-.-</ecNumber>
    </recommendedName>
</protein>
<feature type="chain" id="PRO_0000188891" description="tRNA modification GTPase MnmE">
    <location>
        <begin position="1"/>
        <end position="442"/>
    </location>
</feature>
<feature type="domain" description="TrmE-type G">
    <location>
        <begin position="217"/>
        <end position="363"/>
    </location>
</feature>
<feature type="binding site" evidence="1">
    <location>
        <position position="23"/>
    </location>
    <ligand>
        <name>(6S)-5-formyl-5,6,7,8-tetrahydrofolate</name>
        <dbReference type="ChEBI" id="CHEBI:57457"/>
    </ligand>
</feature>
<feature type="binding site" evidence="1">
    <location>
        <position position="82"/>
    </location>
    <ligand>
        <name>(6S)-5-formyl-5,6,7,8-tetrahydrofolate</name>
        <dbReference type="ChEBI" id="CHEBI:57457"/>
    </ligand>
</feature>
<feature type="binding site" evidence="1">
    <location>
        <position position="121"/>
    </location>
    <ligand>
        <name>(6S)-5-formyl-5,6,7,8-tetrahydrofolate</name>
        <dbReference type="ChEBI" id="CHEBI:57457"/>
    </ligand>
</feature>
<feature type="binding site" evidence="1">
    <location>
        <begin position="227"/>
        <end position="232"/>
    </location>
    <ligand>
        <name>GTP</name>
        <dbReference type="ChEBI" id="CHEBI:37565"/>
    </ligand>
</feature>
<feature type="binding site" evidence="1">
    <location>
        <position position="227"/>
    </location>
    <ligand>
        <name>K(+)</name>
        <dbReference type="ChEBI" id="CHEBI:29103"/>
    </ligand>
</feature>
<feature type="binding site" evidence="1">
    <location>
        <position position="231"/>
    </location>
    <ligand>
        <name>Mg(2+)</name>
        <dbReference type="ChEBI" id="CHEBI:18420"/>
    </ligand>
</feature>
<feature type="binding site" evidence="1">
    <location>
        <begin position="246"/>
        <end position="252"/>
    </location>
    <ligand>
        <name>GTP</name>
        <dbReference type="ChEBI" id="CHEBI:37565"/>
    </ligand>
</feature>
<feature type="binding site" evidence="1">
    <location>
        <position position="246"/>
    </location>
    <ligand>
        <name>K(+)</name>
        <dbReference type="ChEBI" id="CHEBI:29103"/>
    </ligand>
</feature>
<feature type="binding site" evidence="1">
    <location>
        <position position="248"/>
    </location>
    <ligand>
        <name>K(+)</name>
        <dbReference type="ChEBI" id="CHEBI:29103"/>
    </ligand>
</feature>
<feature type="binding site" evidence="1">
    <location>
        <position position="251"/>
    </location>
    <ligand>
        <name>K(+)</name>
        <dbReference type="ChEBI" id="CHEBI:29103"/>
    </ligand>
</feature>
<feature type="binding site" evidence="1">
    <location>
        <position position="252"/>
    </location>
    <ligand>
        <name>Mg(2+)</name>
        <dbReference type="ChEBI" id="CHEBI:18420"/>
    </ligand>
</feature>
<feature type="binding site" evidence="1">
    <location>
        <begin position="271"/>
        <end position="274"/>
    </location>
    <ligand>
        <name>GTP</name>
        <dbReference type="ChEBI" id="CHEBI:37565"/>
    </ligand>
</feature>
<feature type="binding site" evidence="1">
    <location>
        <position position="442"/>
    </location>
    <ligand>
        <name>(6S)-5-formyl-5,6,7,8-tetrahydrofolate</name>
        <dbReference type="ChEBI" id="CHEBI:57457"/>
    </ligand>
</feature>
<comment type="function">
    <text evidence="1">Exhibits a very high intrinsic GTPase hydrolysis rate. Involved in the addition of a carboxymethylaminomethyl (cmnm) group at the wobble position (U34) of certain tRNAs, forming tRNA-cmnm(5)s(2)U34.</text>
</comment>
<comment type="cofactor">
    <cofactor evidence="1">
        <name>K(+)</name>
        <dbReference type="ChEBI" id="CHEBI:29103"/>
    </cofactor>
    <text evidence="1">Binds 1 potassium ion per subunit.</text>
</comment>
<comment type="subunit">
    <text evidence="1">Homodimer. Heterotetramer of two MnmE and two MnmG subunits.</text>
</comment>
<comment type="subcellular location">
    <subcellularLocation>
        <location evidence="1">Cytoplasm</location>
    </subcellularLocation>
</comment>
<comment type="similarity">
    <text evidence="1">Belongs to the TRAFAC class TrmE-Era-EngA-EngB-Septin-like GTPase superfamily. TrmE GTPase family.</text>
</comment>
<comment type="sequence caution" evidence="2">
    <conflict type="erroneous initiation">
        <sequence resource="EMBL-CDS" id="AAD12512"/>
    </conflict>
</comment>
<sequence length="442" mass="50806">MKSEINIFALATAPFNSALHIIRFSGPDVYEILNKITNKKITRKGMQIQRTWIVDENNKRIDDVLLFKFVSPNSYTGEDLIEISCHGNMLIVNEICALLLKKGGVYAKPGEFTQRSFLNGKMSLQQASAVNKLILSPNLLVKDIVLNNLAGEMDQQLEQIAQQVNQLVMQMEVNIDYPEYLDEQVELSTLNNKVKLIIEKLKRIIENSKQLKKLHDPFKIAIIGETNVGKSSLLNALLNQDKAIVSNIKGSTRDVVEGDFNLNGYLIKILDTAGIRKHKSGLEKAGIKKSFESIKQANLVIYLLDATHPKKDLELISFFKKNKKDFFVFYNKKDLITNKFENSISAKQKDIKELVDLLTKYINEFYKKIDQKIYLIENWQQILIEKIKEQLEQFLKQQKKYLFFDVLVTHLREAQQDILKLLGKDVGFDLVNEIFNNFCLGK</sequence>
<accession>P47254</accession>
<accession>Q49330</accession>
<evidence type="ECO:0000255" key="1">
    <source>
        <dbReference type="HAMAP-Rule" id="MF_00379"/>
    </source>
</evidence>
<evidence type="ECO:0000305" key="2"/>
<keyword id="KW-0963">Cytoplasm</keyword>
<keyword id="KW-0342">GTP-binding</keyword>
<keyword id="KW-0378">Hydrolase</keyword>
<keyword id="KW-0460">Magnesium</keyword>
<keyword id="KW-0479">Metal-binding</keyword>
<keyword id="KW-0547">Nucleotide-binding</keyword>
<keyword id="KW-0630">Potassium</keyword>
<keyword id="KW-1185">Reference proteome</keyword>
<keyword id="KW-0819">tRNA processing</keyword>
<gene>
    <name evidence="1" type="primary">mnmE</name>
    <name evidence="1" type="synonym">thdF</name>
    <name evidence="1" type="synonym">trmE</name>
    <name type="ordered locus">MG008</name>
</gene>
<reference key="1">
    <citation type="journal article" date="1995" name="Science">
        <title>The minimal gene complement of Mycoplasma genitalium.</title>
        <authorList>
            <person name="Fraser C.M."/>
            <person name="Gocayne J.D."/>
            <person name="White O."/>
            <person name="Adams M.D."/>
            <person name="Clayton R.A."/>
            <person name="Fleischmann R.D."/>
            <person name="Bult C.J."/>
            <person name="Kerlavage A.R."/>
            <person name="Sutton G.G."/>
            <person name="Kelley J.M."/>
            <person name="Fritchman J.L."/>
            <person name="Weidman J.F."/>
            <person name="Small K.V."/>
            <person name="Sandusky M."/>
            <person name="Fuhrmann J.L."/>
            <person name="Nguyen D.T."/>
            <person name="Utterback T.R."/>
            <person name="Saudek D.M."/>
            <person name="Phillips C.A."/>
            <person name="Merrick J.M."/>
            <person name="Tomb J.-F."/>
            <person name="Dougherty B.A."/>
            <person name="Bott K.F."/>
            <person name="Hu P.-C."/>
            <person name="Lucier T.S."/>
            <person name="Peterson S.N."/>
            <person name="Smith H.O."/>
            <person name="Hutchison C.A. III"/>
            <person name="Venter J.C."/>
        </authorList>
    </citation>
    <scope>NUCLEOTIDE SEQUENCE [LARGE SCALE GENOMIC DNA]</scope>
    <source>
        <strain>ATCC 33530 / DSM 19775 / NCTC 10195 / G37</strain>
    </source>
</reference>
<reference key="2">
    <citation type="journal article" date="1993" name="J. Bacteriol.">
        <title>A survey of the Mycoplasma genitalium genome by using random sequencing.</title>
        <authorList>
            <person name="Peterson S.N."/>
            <person name="Hu P.-C."/>
            <person name="Bott K.F."/>
            <person name="Hutchison C.A. III"/>
        </authorList>
    </citation>
    <scope>NUCLEOTIDE SEQUENCE [GENOMIC DNA] OF 1-88</scope>
    <source>
        <strain>ATCC 33530 / DSM 19775 / NCTC 10195 / G37</strain>
    </source>
</reference>
<dbReference type="EC" id="3.6.-.-" evidence="1"/>
<dbReference type="EMBL" id="L43967">
    <property type="protein sequence ID" value="AAC71224.1"/>
    <property type="molecule type" value="Genomic_DNA"/>
</dbReference>
<dbReference type="EMBL" id="U02216">
    <property type="protein sequence ID" value="AAD12512.1"/>
    <property type="status" value="ALT_INIT"/>
    <property type="molecule type" value="Genomic_DNA"/>
</dbReference>
<dbReference type="PIR" id="H64200">
    <property type="entry name" value="H64200"/>
</dbReference>
<dbReference type="RefSeq" id="WP_010869287.1">
    <property type="nucleotide sequence ID" value="NC_000908.2"/>
</dbReference>
<dbReference type="SMR" id="P47254"/>
<dbReference type="FunCoup" id="P47254">
    <property type="interactions" value="187"/>
</dbReference>
<dbReference type="STRING" id="243273.MG_008"/>
<dbReference type="GeneID" id="88282123"/>
<dbReference type="KEGG" id="mge:MG_008"/>
<dbReference type="eggNOG" id="COG0486">
    <property type="taxonomic scope" value="Bacteria"/>
</dbReference>
<dbReference type="HOGENOM" id="CLU_019624_4_1_14"/>
<dbReference type="InParanoid" id="P47254"/>
<dbReference type="OrthoDB" id="9805918at2"/>
<dbReference type="BioCyc" id="MGEN243273:G1GJ2-8-MONOMER"/>
<dbReference type="Proteomes" id="UP000000807">
    <property type="component" value="Chromosome"/>
</dbReference>
<dbReference type="GO" id="GO:0005737">
    <property type="term" value="C:cytoplasm"/>
    <property type="evidence" value="ECO:0000318"/>
    <property type="project" value="GO_Central"/>
</dbReference>
<dbReference type="GO" id="GO:0005829">
    <property type="term" value="C:cytosol"/>
    <property type="evidence" value="ECO:0000318"/>
    <property type="project" value="GO_Central"/>
</dbReference>
<dbReference type="GO" id="GO:0005525">
    <property type="term" value="F:GTP binding"/>
    <property type="evidence" value="ECO:0007669"/>
    <property type="project" value="UniProtKB-UniRule"/>
</dbReference>
<dbReference type="GO" id="GO:0003924">
    <property type="term" value="F:GTPase activity"/>
    <property type="evidence" value="ECO:0007669"/>
    <property type="project" value="UniProtKB-UniRule"/>
</dbReference>
<dbReference type="GO" id="GO:0046872">
    <property type="term" value="F:metal ion binding"/>
    <property type="evidence" value="ECO:0007669"/>
    <property type="project" value="UniProtKB-KW"/>
</dbReference>
<dbReference type="GO" id="GO:0030488">
    <property type="term" value="P:tRNA methylation"/>
    <property type="evidence" value="ECO:0000318"/>
    <property type="project" value="GO_Central"/>
</dbReference>
<dbReference type="GO" id="GO:0002098">
    <property type="term" value="P:tRNA wobble uridine modification"/>
    <property type="evidence" value="ECO:0000318"/>
    <property type="project" value="GO_Central"/>
</dbReference>
<dbReference type="CDD" id="cd04164">
    <property type="entry name" value="trmE"/>
    <property type="match status" value="1"/>
</dbReference>
<dbReference type="CDD" id="cd14858">
    <property type="entry name" value="TrmE_N"/>
    <property type="match status" value="1"/>
</dbReference>
<dbReference type="FunFam" id="3.40.50.300:FF:001376">
    <property type="entry name" value="tRNA modification GTPase MnmE"/>
    <property type="match status" value="1"/>
</dbReference>
<dbReference type="Gene3D" id="3.40.50.300">
    <property type="entry name" value="P-loop containing nucleotide triphosphate hydrolases"/>
    <property type="match status" value="1"/>
</dbReference>
<dbReference type="Gene3D" id="3.30.1360.120">
    <property type="entry name" value="Probable tRNA modification gtpase trme, domain 1"/>
    <property type="match status" value="1"/>
</dbReference>
<dbReference type="Gene3D" id="1.20.120.430">
    <property type="entry name" value="tRNA modification GTPase MnmE domain 2"/>
    <property type="match status" value="1"/>
</dbReference>
<dbReference type="HAMAP" id="MF_00379">
    <property type="entry name" value="GTPase_MnmE"/>
    <property type="match status" value="1"/>
</dbReference>
<dbReference type="InterPro" id="IPR031168">
    <property type="entry name" value="G_TrmE"/>
</dbReference>
<dbReference type="InterPro" id="IPR006073">
    <property type="entry name" value="GTP-bd"/>
</dbReference>
<dbReference type="InterPro" id="IPR018948">
    <property type="entry name" value="GTP-bd_TrmE_N"/>
</dbReference>
<dbReference type="InterPro" id="IPR004520">
    <property type="entry name" value="GTPase_MnmE"/>
</dbReference>
<dbReference type="InterPro" id="IPR027368">
    <property type="entry name" value="MnmE_dom2"/>
</dbReference>
<dbReference type="InterPro" id="IPR025867">
    <property type="entry name" value="MnmE_helical"/>
</dbReference>
<dbReference type="InterPro" id="IPR027417">
    <property type="entry name" value="P-loop_NTPase"/>
</dbReference>
<dbReference type="InterPro" id="IPR005225">
    <property type="entry name" value="Small_GTP-bd"/>
</dbReference>
<dbReference type="InterPro" id="IPR027266">
    <property type="entry name" value="TrmE/GcvT_dom1"/>
</dbReference>
<dbReference type="NCBIfam" id="TIGR00450">
    <property type="entry name" value="mnmE_trmE_thdF"/>
    <property type="match status" value="1"/>
</dbReference>
<dbReference type="NCBIfam" id="TIGR00231">
    <property type="entry name" value="small_GTP"/>
    <property type="match status" value="1"/>
</dbReference>
<dbReference type="PANTHER" id="PTHR42714">
    <property type="entry name" value="TRNA MODIFICATION GTPASE GTPBP3"/>
    <property type="match status" value="1"/>
</dbReference>
<dbReference type="PANTHER" id="PTHR42714:SF2">
    <property type="entry name" value="TRNA MODIFICATION GTPASE GTPBP3, MITOCHONDRIAL"/>
    <property type="match status" value="1"/>
</dbReference>
<dbReference type="Pfam" id="PF01926">
    <property type="entry name" value="MMR_HSR1"/>
    <property type="match status" value="1"/>
</dbReference>
<dbReference type="Pfam" id="PF12631">
    <property type="entry name" value="MnmE_helical"/>
    <property type="match status" value="1"/>
</dbReference>
<dbReference type="Pfam" id="PF10396">
    <property type="entry name" value="TrmE_N"/>
    <property type="match status" value="1"/>
</dbReference>
<dbReference type="SUPFAM" id="SSF52540">
    <property type="entry name" value="P-loop containing nucleoside triphosphate hydrolases"/>
    <property type="match status" value="1"/>
</dbReference>
<dbReference type="PROSITE" id="PS51709">
    <property type="entry name" value="G_TRME"/>
    <property type="match status" value="1"/>
</dbReference>
<organism>
    <name type="scientific">Mycoplasma genitalium (strain ATCC 33530 / DSM 19775 / NCTC 10195 / G37)</name>
    <name type="common">Mycoplasmoides genitalium</name>
    <dbReference type="NCBI Taxonomy" id="243273"/>
    <lineage>
        <taxon>Bacteria</taxon>
        <taxon>Bacillati</taxon>
        <taxon>Mycoplasmatota</taxon>
        <taxon>Mycoplasmoidales</taxon>
        <taxon>Mycoplasmoidaceae</taxon>
        <taxon>Mycoplasmoides</taxon>
    </lineage>
</organism>
<name>MNME_MYCGE</name>
<proteinExistence type="inferred from homology"/>